<comment type="function">
    <text evidence="4 5 9 10">Forms serotonin (5-hydroxytryptamine/5-HT3)-activated cation-selective channel complexes, which when activated cause fast, depolarizing responses in neurons.</text>
</comment>
<comment type="catalytic activity">
    <reaction evidence="10">
        <text>Na(+)(in) = Na(+)(out)</text>
        <dbReference type="Rhea" id="RHEA:34963"/>
        <dbReference type="ChEBI" id="CHEBI:29101"/>
    </reaction>
</comment>
<comment type="catalytic activity">
    <reaction evidence="10">
        <text>K(+)(in) = K(+)(out)</text>
        <dbReference type="Rhea" id="RHEA:29463"/>
        <dbReference type="ChEBI" id="CHEBI:29103"/>
    </reaction>
</comment>
<comment type="catalytic activity">
    <reaction evidence="4 9 10">
        <text>Ca(2+)(in) = Ca(2+)(out)</text>
        <dbReference type="Rhea" id="RHEA:29671"/>
        <dbReference type="ChEBI" id="CHEBI:29108"/>
    </reaction>
</comment>
<comment type="catalytic activity">
    <reaction evidence="10">
        <text>Mg(2+)(in) = Mg(2+)(out)</text>
        <dbReference type="Rhea" id="RHEA:29827"/>
        <dbReference type="ChEBI" id="CHEBI:18420"/>
    </reaction>
</comment>
<comment type="subunit">
    <text evidence="4 7 9 10">Forms homopentameric as well as heteropentameric serotonin-activated cation-selective channel complexes with HTR3B or HTR3C or HTR3D or HTR3E. The homomeric complex is functional but exhibits low conductance with modified voltage dependence, and decreased agonist and antagonist affinity. Heteropentameric complexes display properties which resemble that of neuronal serotonin-activated channels in vivo (PubMed:10521471, PubMed:15809299, PubMed:17392525, PubMed:9950429). Interacts with RIC3 (PubMed:15809299).</text>
</comment>
<comment type="interaction">
    <interactant intactId="EBI-9008743">
        <id>P46098</id>
    </interactant>
    <interactant intactId="EBI-9008753">
        <id>Q8WXA8</id>
        <label>HTR3C</label>
    </interactant>
    <organismsDiffer>false</organismsDiffer>
    <experiments>5</experiments>
</comment>
<comment type="interaction">
    <interactant intactId="EBI-9008743">
        <id>P46098</id>
    </interactant>
    <interactant intactId="EBI-9008717">
        <id>Q70Z44</id>
        <label>HTR3D</label>
    </interactant>
    <organismsDiffer>false</organismsDiffer>
    <experiments>5</experiments>
</comment>
<comment type="interaction">
    <interactant intactId="EBI-9008743">
        <id>P46098</id>
    </interactant>
    <interactant intactId="EBI-11174612">
        <id>A5X5Y0-1</id>
        <label>HTR3E</label>
    </interactant>
    <organismsDiffer>false</organismsDiffer>
    <experiments>5</experiments>
</comment>
<comment type="interaction">
    <interactant intactId="EBI-9008743">
        <id>P46098</id>
    </interactant>
    <interactant intactId="EBI-11163690">
        <id>A5X5Y0-3</id>
        <label>HTR3E</label>
    </interactant>
    <organismsDiffer>false</organismsDiffer>
    <experiments>3</experiments>
</comment>
<comment type="subcellular location">
    <subcellularLocation>
        <location evidence="17">Postsynaptic cell membrane</location>
        <topology evidence="1">Multi-pass membrane protein</topology>
    </subcellularLocation>
    <subcellularLocation>
        <location evidence="17">Cell membrane</location>
        <topology evidence="1">Multi-pass membrane protein</topology>
    </subcellularLocation>
</comment>
<comment type="alternative products">
    <event type="alternative splicing"/>
    <isoform>
        <id>P46098-1</id>
        <name>1</name>
        <name>5-HT3R-AS</name>
        <sequence type="displayed"/>
    </isoform>
    <isoform>
        <id>P46098-2</id>
        <name>2</name>
        <name>5-HT3R-AL</name>
        <sequence type="described" ref="VSP_000078"/>
    </isoform>
    <isoform>
        <id>P46098-3</id>
        <name>3</name>
        <sequence type="described" ref="VSP_042214"/>
    </isoform>
    <isoform>
        <id>P46098-4</id>
        <name>4</name>
        <sequence type="described" ref="VSP_043484"/>
    </isoform>
    <isoform>
        <id>P46098-5</id>
        <name>5</name>
        <sequence type="described" ref="VSP_043484 VSP_000078"/>
    </isoform>
</comment>
<comment type="tissue specificity">
    <text evidence="4">Expressed in cerebral cortex, amygdala, hippocampus, and testis. Detected in monocytes of the spleen and tonsil, in small and large intestine, uterus, prostate, ovary and placenta.</text>
</comment>
<comment type="domain">
    <text evidence="5">The HA-stretch region of HTR3A seems to be responsible for the low conductance of HTR3A homomers compared to that of HTR3A/HTR3B heteromers.</text>
</comment>
<comment type="similarity">
    <text evidence="15">Belongs to the ligand-gated ion channel (TC 1.A.9) family. 5-hydroxytryptamine receptor (TC 1.A.9.2) subfamily. HTR3A sub-subfamily.</text>
</comment>
<sequence length="478" mass="55280">MLLWVQQALLALLLPTLLAQGEARRSRNTTRPALLRLSDYLLTNYRKGVRPVRDWRKPTTVSIDVIVYAILNVDEKNQVLTTYIWYRQYWTDEFLQWNPEDFDNITKLSIPTDSIWVPDILINEFVDVGKSPNIPYVYIRHQGEVQNYKPLQVVTACSLDIYNFPFDVQNCSLTFTSWLHTIQDINISLWRLPEKVKSDRSVFMNQGEWELLGVLPYFREFSMESSNYYAEMKFYVVIRRRPLFYVVSLLLPSIFLMVMDIVGFYLPPNSGERVSFKITLLLGYSVFLIIVSDTLPATAIGTPLIGVYFVVCMALLVISLAETIFIVRLVHKQDLQQPVPAWLRHLVLERIAWLLCLREQSTSQRPPATSQATKTDDCSAMGNHCSHMGGPQDFEKSPRDRCSPPPPPREASLAVCGLLQELSSIRQFLEKRDEIREVARDWLRVGSVLDKLLFHIYLLAVLAYSITLVMLWSIWQYA</sequence>
<reference key="1">
    <citation type="journal article" date="1995" name="Mol. Pharmacol.">
        <title>Molecular cloning of human 5-hydroxytryptamine3 receptor: heterogeneity in distribution and function among species.</title>
        <authorList>
            <person name="Miyake A."/>
            <person name="Mochizuki S."/>
            <person name="Takemoto Y."/>
            <person name="Akuzawa S."/>
        </authorList>
    </citation>
    <scope>NUCLEOTIDE SEQUENCE [MRNA] (ISOFORM 1)</scope>
    <source>
        <tissue>Hippocampus</tissue>
    </source>
</reference>
<reference key="2">
    <citation type="journal article" date="1995" name="Mol. Pharmacol.">
        <title>Cloning and functional expression of a human 5-hydroxytryptamine type 3AS receptor subunit.</title>
        <authorList>
            <person name="Belelli D."/>
            <person name="Balcarek J.M."/>
            <person name="Hope A.G."/>
            <person name="Peters J.A."/>
            <person name="Lambert J.J."/>
            <person name="Blackburn T.P."/>
        </authorList>
    </citation>
    <scope>NUCLEOTIDE SEQUENCE [MRNA] (ISOFORM 1)</scope>
    <source>
        <tissue>Amygdala</tissue>
    </source>
</reference>
<reference key="3">
    <citation type="journal article" date="1998" name="Ann. N. Y. Acad. Sci.">
        <title>Molecular cloning of alternatively spliced human 5HT3 receptor cDNAs.</title>
        <authorList>
            <person name="Bruess M."/>
            <person name="Goethert M."/>
            <person name="Hayer M."/>
            <person name="Bonisch H."/>
        </authorList>
    </citation>
    <scope>NUCLEOTIDE SEQUENCE [MRNA] (ISOFORMS 1 AND 2)</scope>
    <source>
        <tissue>Amygdala</tissue>
        <tissue>Hippocampus</tissue>
    </source>
</reference>
<reference key="4">
    <citation type="journal article" date="2000" name="Neuropharmacology">
        <title>Exon-intron organization of the human 5-HT3A receptor gene.</title>
        <authorList>
            <person name="Bruess M."/>
            <person name="Eucker T."/>
            <person name="Goethert M."/>
            <person name="Bonisch H."/>
        </authorList>
    </citation>
    <scope>NUCLEOTIDE SEQUENCE [GENOMIC DNA]</scope>
    <source>
        <tissue>Blood</tissue>
    </source>
</reference>
<reference key="5">
    <citation type="submission" date="2002-04" db="EMBL/GenBank/DDBJ databases">
        <title>cDNA clones of human proteins involved in signal transduction sequenced by the Guthrie cDNA resource center (www.cdna.org).</title>
        <authorList>
            <person name="Puhl H.L. III"/>
            <person name="Ikeda S.R."/>
            <person name="Aronstam R.S."/>
        </authorList>
    </citation>
    <scope>NUCLEOTIDE SEQUENCE [LARGE SCALE MRNA] (ISOFORM 1)</scope>
</reference>
<reference key="6">
    <citation type="submission" date="2003-05" db="EMBL/GenBank/DDBJ databases">
        <title>Cloning of human full-length CDSs in BD Creator(TM) system donor vector.</title>
        <authorList>
            <person name="Kalnine N."/>
            <person name="Chen X."/>
            <person name="Rolfs A."/>
            <person name="Halleck A."/>
            <person name="Hines L."/>
            <person name="Eisenstein S."/>
            <person name="Koundinya M."/>
            <person name="Raphael J."/>
            <person name="Moreira D."/>
            <person name="Kelley T."/>
            <person name="LaBaer J."/>
            <person name="Lin Y."/>
            <person name="Phelan M."/>
            <person name="Farmer A."/>
        </authorList>
    </citation>
    <scope>NUCLEOTIDE SEQUENCE [LARGE SCALE MRNA] (ISOFORM 4)</scope>
</reference>
<reference key="7">
    <citation type="journal article" date="2004" name="Genomics">
        <title>PCR isolation and cloning of novel splice variant mRNAs from known drug target genes.</title>
        <authorList>
            <person name="Jin P."/>
            <person name="Fu G.K."/>
            <person name="Wilson A.D."/>
            <person name="Yang J."/>
            <person name="Chien D."/>
            <person name="Hawkins P.R."/>
            <person name="Au-Young J."/>
            <person name="Stuve L.L."/>
        </authorList>
    </citation>
    <scope>NUCLEOTIDE SEQUENCE [LARGE SCALE MRNA] (ISOFORM 5)</scope>
</reference>
<reference key="8">
    <citation type="journal article" date="2004" name="Nat. Genet.">
        <title>Complete sequencing and characterization of 21,243 full-length human cDNAs.</title>
        <authorList>
            <person name="Ota T."/>
            <person name="Suzuki Y."/>
            <person name="Nishikawa T."/>
            <person name="Otsuki T."/>
            <person name="Sugiyama T."/>
            <person name="Irie R."/>
            <person name="Wakamatsu A."/>
            <person name="Hayashi K."/>
            <person name="Sato H."/>
            <person name="Nagai K."/>
            <person name="Kimura K."/>
            <person name="Makita H."/>
            <person name="Sekine M."/>
            <person name="Obayashi M."/>
            <person name="Nishi T."/>
            <person name="Shibahara T."/>
            <person name="Tanaka T."/>
            <person name="Ishii S."/>
            <person name="Yamamoto J."/>
            <person name="Saito K."/>
            <person name="Kawai Y."/>
            <person name="Isono Y."/>
            <person name="Nakamura Y."/>
            <person name="Nagahari K."/>
            <person name="Murakami K."/>
            <person name="Yasuda T."/>
            <person name="Iwayanagi T."/>
            <person name="Wagatsuma M."/>
            <person name="Shiratori A."/>
            <person name="Sudo H."/>
            <person name="Hosoiri T."/>
            <person name="Kaku Y."/>
            <person name="Kodaira H."/>
            <person name="Kondo H."/>
            <person name="Sugawara M."/>
            <person name="Takahashi M."/>
            <person name="Kanda K."/>
            <person name="Yokoi T."/>
            <person name="Furuya T."/>
            <person name="Kikkawa E."/>
            <person name="Omura Y."/>
            <person name="Abe K."/>
            <person name="Kamihara K."/>
            <person name="Katsuta N."/>
            <person name="Sato K."/>
            <person name="Tanikawa M."/>
            <person name="Yamazaki M."/>
            <person name="Ninomiya K."/>
            <person name="Ishibashi T."/>
            <person name="Yamashita H."/>
            <person name="Murakawa K."/>
            <person name="Fujimori K."/>
            <person name="Tanai H."/>
            <person name="Kimata M."/>
            <person name="Watanabe M."/>
            <person name="Hiraoka S."/>
            <person name="Chiba Y."/>
            <person name="Ishida S."/>
            <person name="Ono Y."/>
            <person name="Takiguchi S."/>
            <person name="Watanabe S."/>
            <person name="Yosida M."/>
            <person name="Hotuta T."/>
            <person name="Kusano J."/>
            <person name="Kanehori K."/>
            <person name="Takahashi-Fujii A."/>
            <person name="Hara H."/>
            <person name="Tanase T.-O."/>
            <person name="Nomura Y."/>
            <person name="Togiya S."/>
            <person name="Komai F."/>
            <person name="Hara R."/>
            <person name="Takeuchi K."/>
            <person name="Arita M."/>
            <person name="Imose N."/>
            <person name="Musashino K."/>
            <person name="Yuuki H."/>
            <person name="Oshima A."/>
            <person name="Sasaki N."/>
            <person name="Aotsuka S."/>
            <person name="Yoshikawa Y."/>
            <person name="Matsunawa H."/>
            <person name="Ichihara T."/>
            <person name="Shiohata N."/>
            <person name="Sano S."/>
            <person name="Moriya S."/>
            <person name="Momiyama H."/>
            <person name="Satoh N."/>
            <person name="Takami S."/>
            <person name="Terashima Y."/>
            <person name="Suzuki O."/>
            <person name="Nakagawa S."/>
            <person name="Senoh A."/>
            <person name="Mizoguchi H."/>
            <person name="Goto Y."/>
            <person name="Shimizu F."/>
            <person name="Wakebe H."/>
            <person name="Hishigaki H."/>
            <person name="Watanabe T."/>
            <person name="Sugiyama A."/>
            <person name="Takemoto M."/>
            <person name="Kawakami B."/>
            <person name="Yamazaki M."/>
            <person name="Watanabe K."/>
            <person name="Kumagai A."/>
            <person name="Itakura S."/>
            <person name="Fukuzumi Y."/>
            <person name="Fujimori Y."/>
            <person name="Komiyama M."/>
            <person name="Tashiro H."/>
            <person name="Tanigami A."/>
            <person name="Fujiwara T."/>
            <person name="Ono T."/>
            <person name="Yamada K."/>
            <person name="Fujii Y."/>
            <person name="Ozaki K."/>
            <person name="Hirao M."/>
            <person name="Ohmori Y."/>
            <person name="Kawabata A."/>
            <person name="Hikiji T."/>
            <person name="Kobatake N."/>
            <person name="Inagaki H."/>
            <person name="Ikema Y."/>
            <person name="Okamoto S."/>
            <person name="Okitani R."/>
            <person name="Kawakami T."/>
            <person name="Noguchi S."/>
            <person name="Itoh T."/>
            <person name="Shigeta K."/>
            <person name="Senba T."/>
            <person name="Matsumura K."/>
            <person name="Nakajima Y."/>
            <person name="Mizuno T."/>
            <person name="Morinaga M."/>
            <person name="Sasaki M."/>
            <person name="Togashi T."/>
            <person name="Oyama M."/>
            <person name="Hata H."/>
            <person name="Watanabe M."/>
            <person name="Komatsu T."/>
            <person name="Mizushima-Sugano J."/>
            <person name="Satoh T."/>
            <person name="Shirai Y."/>
            <person name="Takahashi Y."/>
            <person name="Nakagawa K."/>
            <person name="Okumura K."/>
            <person name="Nagase T."/>
            <person name="Nomura N."/>
            <person name="Kikuchi H."/>
            <person name="Masuho Y."/>
            <person name="Yamashita R."/>
            <person name="Nakai K."/>
            <person name="Yada T."/>
            <person name="Nakamura Y."/>
            <person name="Ohara O."/>
            <person name="Isogai T."/>
            <person name="Sugano S."/>
        </authorList>
    </citation>
    <scope>NUCLEOTIDE SEQUENCE [LARGE SCALE MRNA] (ISOFORM 3)</scope>
</reference>
<reference key="9">
    <citation type="journal article" date="2006" name="Nature">
        <title>Human chromosome 11 DNA sequence and analysis including novel gene identification.</title>
        <authorList>
            <person name="Taylor T.D."/>
            <person name="Noguchi H."/>
            <person name="Totoki Y."/>
            <person name="Toyoda A."/>
            <person name="Kuroki Y."/>
            <person name="Dewar K."/>
            <person name="Lloyd C."/>
            <person name="Itoh T."/>
            <person name="Takeda T."/>
            <person name="Kim D.-W."/>
            <person name="She X."/>
            <person name="Barlow K.F."/>
            <person name="Bloom T."/>
            <person name="Bruford E."/>
            <person name="Chang J.L."/>
            <person name="Cuomo C.A."/>
            <person name="Eichler E."/>
            <person name="FitzGerald M.G."/>
            <person name="Jaffe D.B."/>
            <person name="LaButti K."/>
            <person name="Nicol R."/>
            <person name="Park H.-S."/>
            <person name="Seaman C."/>
            <person name="Sougnez C."/>
            <person name="Yang X."/>
            <person name="Zimmer A.R."/>
            <person name="Zody M.C."/>
            <person name="Birren B.W."/>
            <person name="Nusbaum C."/>
            <person name="Fujiyama A."/>
            <person name="Hattori M."/>
            <person name="Rogers J."/>
            <person name="Lander E.S."/>
            <person name="Sakaki Y."/>
        </authorList>
    </citation>
    <scope>NUCLEOTIDE SEQUENCE [LARGE SCALE GENOMIC DNA]</scope>
</reference>
<reference key="10">
    <citation type="submission" date="2005-07" db="EMBL/GenBank/DDBJ databases">
        <authorList>
            <person name="Mural R.J."/>
            <person name="Istrail S."/>
            <person name="Sutton G."/>
            <person name="Florea L."/>
            <person name="Halpern A.L."/>
            <person name="Mobarry C.M."/>
            <person name="Lippert R."/>
            <person name="Walenz B."/>
            <person name="Shatkay H."/>
            <person name="Dew I."/>
            <person name="Miller J.R."/>
            <person name="Flanigan M.J."/>
            <person name="Edwards N.J."/>
            <person name="Bolanos R."/>
            <person name="Fasulo D."/>
            <person name="Halldorsson B.V."/>
            <person name="Hannenhalli S."/>
            <person name="Turner R."/>
            <person name="Yooseph S."/>
            <person name="Lu F."/>
            <person name="Nusskern D.R."/>
            <person name="Shue B.C."/>
            <person name="Zheng X.H."/>
            <person name="Zhong F."/>
            <person name="Delcher A.L."/>
            <person name="Huson D.H."/>
            <person name="Kravitz S.A."/>
            <person name="Mouchard L."/>
            <person name="Reinert K."/>
            <person name="Remington K.A."/>
            <person name="Clark A.G."/>
            <person name="Waterman M.S."/>
            <person name="Eichler E.E."/>
            <person name="Adams M.D."/>
            <person name="Hunkapiller M.W."/>
            <person name="Myers E.W."/>
            <person name="Venter J.C."/>
        </authorList>
    </citation>
    <scope>NUCLEOTIDE SEQUENCE [LARGE SCALE GENOMIC DNA]</scope>
</reference>
<reference key="11">
    <citation type="journal article" date="2004" name="Genome Res.">
        <title>The status, quality, and expansion of the NIH full-length cDNA project: the Mammalian Gene Collection (MGC).</title>
        <authorList>
            <consortium name="The MGC Project Team"/>
        </authorList>
    </citation>
    <scope>NUCLEOTIDE SEQUENCE [LARGE SCALE MRNA] (ISOFORM 1)</scope>
    <source>
        <tissue>Lung</tissue>
    </source>
</reference>
<reference key="12">
    <citation type="journal article" date="1999" name="Nature">
        <title>The 5-HT3B subunit is a major determinant of serotonin-receptor function.</title>
        <authorList>
            <person name="Davies P.A."/>
            <person name="Pistis M."/>
            <person name="Hanna M.C."/>
            <person name="Peters J.A."/>
            <person name="Lambert J.J."/>
            <person name="Hales T.G."/>
            <person name="Kirkness E.F."/>
        </authorList>
    </citation>
    <scope>FUNCTION</scope>
    <scope>TRANSPORTER ACTIVITY</scope>
    <scope>SUBUNIT</scope>
    <scope>SUBCELLULAR LOCATION</scope>
</reference>
<reference key="13">
    <citation type="journal article" date="1999" name="J. Biol. Chem.">
        <title>The pharmacological and functional characteristics of the serotonin 5-HT(3A) receptor are specifically modified by a 5-HT(3B) receptor subunit.</title>
        <authorList>
            <person name="Dubin A.E."/>
            <person name="Huvar R."/>
            <person name="D'Andrea M.R."/>
            <person name="Pyati J."/>
            <person name="Zhu J.Y."/>
            <person name="Joy K.C."/>
            <person name="Wilson S.J."/>
            <person name="Galindo J.E."/>
            <person name="Glass C.A."/>
            <person name="Luo L."/>
            <person name="Jackson M.R."/>
            <person name="Lovenberg T.W."/>
            <person name="Erlander M.G."/>
        </authorList>
    </citation>
    <scope>FUNCTION</scope>
    <scope>TRANSPORTER ACTIVITY</scope>
    <scope>SUBUNIT</scope>
    <scope>TISSUE SPECIFICITY</scope>
    <source>
        <tissue>Small intestine</tissue>
    </source>
</reference>
<reference key="14">
    <citation type="journal article" date="2003" name="Nature">
        <title>A cytoplasmic region determines single-channel conductance in 5-HT3 receptors.</title>
        <authorList>
            <person name="Kelley S.P."/>
            <person name="Dunlop J.I."/>
            <person name="Kirkness E.F."/>
            <person name="Lambert J.J."/>
            <person name="Peters J.A."/>
        </authorList>
    </citation>
    <scope>FUNCTION</scope>
    <scope>DOMAIN</scope>
    <scope>REGION</scope>
    <scope>MUTAGENESIS OF ARG-432; ARG-436 AND ARG-440</scope>
</reference>
<reference key="15">
    <citation type="journal article" date="2005" name="J. Biol. Chem.">
        <title>Cell surface expression of 5-hydroxytryptamine type 3 receptors is promoted by RIC-3.</title>
        <authorList>
            <person name="Cheng A."/>
            <person name="McDonald N.A."/>
            <person name="Connolly C.N."/>
        </authorList>
    </citation>
    <scope>INTERACTION WITH RIC3</scope>
</reference>
<reference key="16">
    <citation type="journal article" date="2007" name="Mol. Pharmacol.">
        <title>Characterization of the novel human serotonin receptor subunits 5-HT3C, 5-HT3D, and 5-HT3E.</title>
        <authorList>
            <person name="Niesler B."/>
            <person name="Walstab J."/>
            <person name="Combrink S."/>
            <person name="Moeller D."/>
            <person name="Kapeller J."/>
            <person name="Rietdorf J."/>
            <person name="Boenisch H."/>
            <person name="Goethert M."/>
            <person name="Rappold G."/>
            <person name="Bruess M."/>
        </authorList>
    </citation>
    <scope>FUNCTION</scope>
    <scope>TRANSPORTER ACTIVITY</scope>
    <scope>SUBUNIT</scope>
    <scope>MUTAGENESIS OF TRP-178</scope>
</reference>
<reference key="17">
    <citation type="journal article" date="2004" name="Clin. Rheumatol.">
        <title>Mutational analysis of serotonin receptor genes: HTR3A and HTR3B in fibromyalgia patients.</title>
        <authorList>
            <person name="Frank B."/>
            <person name="Niesler B."/>
            <person name="Bondy B."/>
            <person name="Spaeth M."/>
            <person name="Pongratz D.E."/>
            <person name="Ackenheil M."/>
            <person name="Fischer C."/>
            <person name="Rappold G."/>
        </authorList>
    </citation>
    <scope>VARIANT THR-33</scope>
</reference>
<reference key="18">
    <citation type="journal article" date="2006" name="Biol. Psychiatry">
        <title>Distinguishable haplotype blocks in the HTR3A and HTR3B region in the Japanese reveal evidence of association of HTR3B with female major depression.</title>
        <authorList>
            <person name="Yamada K."/>
            <person name="Hattori E."/>
            <person name="Iwayama Y."/>
            <person name="Ohnishi T."/>
            <person name="Ohba H."/>
            <person name="Toyota T."/>
            <person name="Takao H."/>
            <person name="Minabe Y."/>
            <person name="Nakatani N."/>
            <person name="Higuchi T."/>
            <person name="Detera-Wadleigh S.D."/>
            <person name="Yoshikawa T."/>
        </authorList>
    </citation>
    <scope>VARIANTS HIS-344; ARG-391 AND GLN-409</scope>
</reference>
<protein>
    <recommendedName>
        <fullName evidence="16">5-hydroxytryptamine receptor 3A</fullName>
        <shortName>5-HT3-A</shortName>
        <shortName>5-HT3A</shortName>
    </recommendedName>
    <alternativeName>
        <fullName>5-hydroxytryptamine receptor 3</fullName>
        <shortName>5-HT-3</shortName>
        <shortName>5-HT3R</shortName>
    </alternativeName>
    <alternativeName>
        <fullName>Serotonin receptor 3A</fullName>
    </alternativeName>
    <alternativeName>
        <fullName>Serotonin-gated ion channel receptor</fullName>
    </alternativeName>
</protein>
<gene>
    <name evidence="18" type="primary">HTR3A</name>
    <name type="synonym">5HT3R</name>
    <name type="synonym">HTR3</name>
</gene>
<feature type="signal peptide" evidence="2">
    <location>
        <begin position="1"/>
        <end position="23"/>
    </location>
</feature>
<feature type="chain" id="PRO_0000000408" description="5-hydroxytryptamine receptor 3A">
    <location>
        <begin position="24"/>
        <end position="478"/>
    </location>
</feature>
<feature type="topological domain" description="Extracellular" evidence="1">
    <location>
        <begin position="24"/>
        <end position="241"/>
    </location>
</feature>
<feature type="transmembrane region" description="Helical; Name=1" evidence="2">
    <location>
        <begin position="242"/>
        <end position="268"/>
    </location>
</feature>
<feature type="topological domain" description="Cytoplasmic" evidence="1">
    <location>
        <begin position="269"/>
        <end position="273"/>
    </location>
</feature>
<feature type="transmembrane region" description="Helical; Name=2" evidence="2">
    <location>
        <begin position="274"/>
        <end position="292"/>
    </location>
</feature>
<feature type="topological domain" description="Extracellular" evidence="1">
    <location>
        <begin position="293"/>
        <end position="302"/>
    </location>
</feature>
<feature type="transmembrane region" description="Helical; Name=3" evidence="2">
    <location>
        <begin position="303"/>
        <end position="321"/>
    </location>
</feature>
<feature type="topological domain" description="Cytoplasmic" evidence="1">
    <location>
        <begin position="322"/>
        <end position="455"/>
    </location>
</feature>
<feature type="transmembrane region" description="Helical; Name=4" evidence="2">
    <location>
        <begin position="456"/>
        <end position="475"/>
    </location>
</feature>
<feature type="topological domain" description="Extracellular" evidence="1">
    <location>
        <begin position="476"/>
        <end position="478"/>
    </location>
</feature>
<feature type="region of interest" description="Disordered" evidence="3">
    <location>
        <begin position="389"/>
        <end position="408"/>
    </location>
</feature>
<feature type="region of interest" description="HA-stretch; determines single-channel conductance in 5-HT3 receptors" evidence="5">
    <location>
        <begin position="414"/>
        <end position="450"/>
    </location>
</feature>
<feature type="compositionally biased region" description="Basic and acidic residues" evidence="3">
    <location>
        <begin position="393"/>
        <end position="402"/>
    </location>
</feature>
<feature type="glycosylation site" description="N-linked (GlcNAc...) asparagine" evidence="2">
    <location>
        <position position="28"/>
    </location>
</feature>
<feature type="glycosylation site" description="N-linked (GlcNAc...) asparagine" evidence="2">
    <location>
        <position position="104"/>
    </location>
</feature>
<feature type="glycosylation site" description="N-linked (GlcNAc...) asparagine" evidence="2">
    <location>
        <position position="170"/>
    </location>
</feature>
<feature type="glycosylation site" description="N-linked (GlcNAc...) asparagine" evidence="2">
    <location>
        <position position="186"/>
    </location>
</feature>
<feature type="disulfide bond" evidence="1">
    <location>
        <begin position="157"/>
        <end position="171"/>
    </location>
</feature>
<feature type="splice variant" id="VSP_042214" description="In isoform 3." evidence="11">
    <original>MLLWVQQALLALLLPTLLAQGE</original>
    <variation>MHRSFLQ</variation>
    <location>
        <begin position="1"/>
        <end position="22"/>
    </location>
</feature>
<feature type="splice variant" id="VSP_043484" description="In isoform 4 and isoform 5." evidence="12 14">
    <original>M</original>
    <variation>MLGKLAM</variation>
    <location>
        <position position="1"/>
    </location>
</feature>
<feature type="splice variant" id="VSP_000078" description="In isoform 2 and isoform 5." evidence="12 13">
    <original>G</original>
    <variation>GKAPPGSRAQSGEKPAPSHLLHVSLASALGCTG</variation>
    <location>
        <position position="306"/>
    </location>
</feature>
<feature type="sequence variant" id="VAR_037398" description="In dbSNP:rs117793058." evidence="6">
    <original>A</original>
    <variation>T</variation>
    <location>
        <position position="33"/>
    </location>
</feature>
<feature type="sequence variant" id="VAR_037399" description="In dbSNP:rs4938063.">
    <original>S</original>
    <variation>N</variation>
    <location>
        <position position="253"/>
    </location>
</feature>
<feature type="sequence variant" id="VAR_037400" description="In dbSNP:rs35815285." evidence="8">
    <original>R</original>
    <variation>H</variation>
    <location>
        <position position="344"/>
    </location>
</feature>
<feature type="sequence variant" id="VAR_037401" evidence="8">
    <original>P</original>
    <variation>R</variation>
    <location>
        <position position="391"/>
    </location>
</feature>
<feature type="sequence variant" id="VAR_037402" description="In dbSNP:rs183698487." evidence="8">
    <original>R</original>
    <variation>Q</variation>
    <location>
        <position position="409"/>
    </location>
</feature>
<feature type="mutagenesis site" description="Abolished 5-hydroxytryptamine (serotonin) binding to the heteromeric receptor." evidence="9">
    <original>W</original>
    <variation>S</variation>
    <location>
        <position position="178"/>
    </location>
</feature>
<feature type="mutagenesis site" description="Little effect on conductance. Massive increase of conductance; when associated with D-436 and A-440." evidence="5">
    <original>R</original>
    <variation>Q</variation>
    <location>
        <position position="432"/>
    </location>
</feature>
<feature type="mutagenesis site" description="Increased conductance. Massive increase of conductance; when associated with Q-432 and A-440." evidence="5">
    <original>R</original>
    <variation>D</variation>
    <location>
        <position position="436"/>
    </location>
</feature>
<feature type="mutagenesis site" description="Increased conductance. Massive increase of conductance; when associated with Q-432 and D-436." evidence="5">
    <original>R</original>
    <variation>A</variation>
    <location>
        <position position="440"/>
    </location>
</feature>
<feature type="sequence conflict" description="In Ref. 2; AAB37533." evidence="15" ref="2">
    <original>R</original>
    <variation>T</variation>
    <location>
        <position position="46"/>
    </location>
</feature>
<feature type="sequence conflict" description="In Ref. 2; AAB37533." evidence="15" ref="2">
    <original>F</original>
    <variation>L</variation>
    <location>
        <position position="125"/>
    </location>
</feature>
<feature type="sequence conflict" description="In Ref. 2; AAB37533." evidence="15" ref="2">
    <original>A</original>
    <variation>T</variation>
    <location>
        <position position="321"/>
    </location>
</feature>
<feature type="sequence conflict" description="In Ref. 2; AAB37533." evidence="15" ref="2">
    <original>S</original>
    <variation>T</variation>
    <location>
        <position position="386"/>
    </location>
</feature>
<feature type="helix" evidence="19">
    <location>
        <begin position="33"/>
        <end position="42"/>
    </location>
</feature>
<feature type="strand" evidence="21">
    <location>
        <begin position="47"/>
        <end position="49"/>
    </location>
</feature>
<feature type="strand" evidence="19">
    <location>
        <begin position="59"/>
        <end position="64"/>
    </location>
</feature>
<feature type="strand" evidence="19">
    <location>
        <begin position="67"/>
        <end position="74"/>
    </location>
</feature>
<feature type="turn" evidence="19">
    <location>
        <begin position="75"/>
        <end position="78"/>
    </location>
</feature>
<feature type="strand" evidence="19">
    <location>
        <begin position="79"/>
        <end position="91"/>
    </location>
</feature>
<feature type="strand" evidence="20">
    <location>
        <begin position="93"/>
        <end position="95"/>
    </location>
</feature>
<feature type="helix" evidence="19">
    <location>
        <begin position="99"/>
        <end position="102"/>
    </location>
</feature>
<feature type="strand" evidence="19">
    <location>
        <begin position="107"/>
        <end position="111"/>
    </location>
</feature>
<feature type="helix" evidence="19">
    <location>
        <begin position="112"/>
        <end position="114"/>
    </location>
</feature>
<feature type="strand" evidence="19">
    <location>
        <begin position="120"/>
        <end position="122"/>
    </location>
</feature>
<feature type="strand" evidence="19">
    <location>
        <begin position="125"/>
        <end position="128"/>
    </location>
</feature>
<feature type="strand" evidence="19">
    <location>
        <begin position="136"/>
        <end position="140"/>
    </location>
</feature>
<feature type="strand" evidence="19">
    <location>
        <begin position="143"/>
        <end position="156"/>
    </location>
</feature>
<feature type="turn" evidence="19">
    <location>
        <begin position="162"/>
        <end position="165"/>
    </location>
</feature>
<feature type="strand" evidence="19">
    <location>
        <begin position="168"/>
        <end position="179"/>
    </location>
</feature>
<feature type="turn" evidence="19">
    <location>
        <begin position="182"/>
        <end position="184"/>
    </location>
</feature>
<feature type="strand" evidence="19">
    <location>
        <begin position="185"/>
        <end position="191"/>
    </location>
</feature>
<feature type="helix" evidence="19">
    <location>
        <begin position="193"/>
        <end position="197"/>
    </location>
</feature>
<feature type="strand" evidence="19">
    <location>
        <begin position="207"/>
        <end position="226"/>
    </location>
</feature>
<feature type="strand" evidence="19">
    <location>
        <begin position="228"/>
        <end position="240"/>
    </location>
</feature>
<feature type="helix" evidence="19">
    <location>
        <begin position="243"/>
        <end position="263"/>
    </location>
</feature>
<feature type="helix" evidence="19">
    <location>
        <begin position="268"/>
        <end position="270"/>
    </location>
</feature>
<feature type="helix" evidence="19">
    <location>
        <begin position="272"/>
        <end position="294"/>
    </location>
</feature>
<feature type="helix" evidence="19">
    <location>
        <begin position="305"/>
        <end position="331"/>
    </location>
</feature>
<feature type="helix" evidence="19">
    <location>
        <begin position="332"/>
        <end position="335"/>
    </location>
</feature>
<feature type="helix" evidence="19">
    <location>
        <begin position="341"/>
        <end position="348"/>
    </location>
</feature>
<feature type="helix" evidence="19">
    <location>
        <begin position="350"/>
        <end position="354"/>
    </location>
</feature>
<feature type="helix" evidence="19">
    <location>
        <begin position="412"/>
        <end position="477"/>
    </location>
</feature>
<feature type="sequence conflict" description="In Ref. 7; CD014118." evidence="15" ref="7">
    <original>C</original>
    <variation>W</variation>
    <location sequence="P46098-5">
        <position position="342"/>
    </location>
</feature>
<keyword id="KW-0002">3D-structure</keyword>
<keyword id="KW-0025">Alternative splicing</keyword>
<keyword id="KW-1003">Cell membrane</keyword>
<keyword id="KW-1015">Disulfide bond</keyword>
<keyword id="KW-0325">Glycoprotein</keyword>
<keyword id="KW-0407">Ion channel</keyword>
<keyword id="KW-0406">Ion transport</keyword>
<keyword id="KW-1071">Ligand-gated ion channel</keyword>
<keyword id="KW-0472">Membrane</keyword>
<keyword id="KW-0628">Postsynaptic cell membrane</keyword>
<keyword id="KW-0675">Receptor</keyword>
<keyword id="KW-1185">Reference proteome</keyword>
<keyword id="KW-0732">Signal</keyword>
<keyword id="KW-0770">Synapse</keyword>
<keyword id="KW-0812">Transmembrane</keyword>
<keyword id="KW-1133">Transmembrane helix</keyword>
<keyword id="KW-0813">Transport</keyword>
<organism>
    <name type="scientific">Homo sapiens</name>
    <name type="common">Human</name>
    <dbReference type="NCBI Taxonomy" id="9606"/>
    <lineage>
        <taxon>Eukaryota</taxon>
        <taxon>Metazoa</taxon>
        <taxon>Chordata</taxon>
        <taxon>Craniata</taxon>
        <taxon>Vertebrata</taxon>
        <taxon>Euteleostomi</taxon>
        <taxon>Mammalia</taxon>
        <taxon>Eutheria</taxon>
        <taxon>Euarchontoglires</taxon>
        <taxon>Primates</taxon>
        <taxon>Haplorrhini</taxon>
        <taxon>Catarrhini</taxon>
        <taxon>Hominidae</taxon>
        <taxon>Homo</taxon>
    </lineage>
</organism>
<evidence type="ECO:0000250" key="1">
    <source>
        <dbReference type="UniProtKB" id="P23979"/>
    </source>
</evidence>
<evidence type="ECO:0000255" key="2"/>
<evidence type="ECO:0000256" key="3">
    <source>
        <dbReference type="SAM" id="MobiDB-lite"/>
    </source>
</evidence>
<evidence type="ECO:0000269" key="4">
    <source>
    </source>
</evidence>
<evidence type="ECO:0000269" key="5">
    <source>
    </source>
</evidence>
<evidence type="ECO:0000269" key="6">
    <source>
    </source>
</evidence>
<evidence type="ECO:0000269" key="7">
    <source>
    </source>
</evidence>
<evidence type="ECO:0000269" key="8">
    <source>
    </source>
</evidence>
<evidence type="ECO:0000269" key="9">
    <source>
    </source>
</evidence>
<evidence type="ECO:0000269" key="10">
    <source>
    </source>
</evidence>
<evidence type="ECO:0000303" key="11">
    <source>
    </source>
</evidence>
<evidence type="ECO:0000303" key="12">
    <source>
    </source>
</evidence>
<evidence type="ECO:0000303" key="13">
    <source>
    </source>
</evidence>
<evidence type="ECO:0000303" key="14">
    <source ref="6"/>
</evidence>
<evidence type="ECO:0000305" key="15"/>
<evidence type="ECO:0000305" key="16">
    <source>
    </source>
</evidence>
<evidence type="ECO:0000305" key="17">
    <source>
    </source>
</evidence>
<evidence type="ECO:0000312" key="18">
    <source>
        <dbReference type="HGNC" id="HGNC:5297"/>
    </source>
</evidence>
<evidence type="ECO:0007829" key="19">
    <source>
        <dbReference type="PDB" id="8AXD"/>
    </source>
</evidence>
<evidence type="ECO:0007829" key="20">
    <source>
        <dbReference type="PDB" id="8BL8"/>
    </source>
</evidence>
<evidence type="ECO:0007829" key="21">
    <source>
        <dbReference type="PDB" id="8BLA"/>
    </source>
</evidence>
<proteinExistence type="evidence at protein level"/>
<accession>P46098</accession>
<accession>B4DSY6</accession>
<accession>G5E986</accession>
<accession>O60854</accession>
<accession>Q7KZM7</accession>
<accession>Q99918</accession>
<accession>Q9BSZ9</accession>
<dbReference type="EMBL" id="D49394">
    <property type="protein sequence ID" value="BAA08387.1"/>
    <property type="molecule type" value="mRNA"/>
</dbReference>
<dbReference type="EMBL" id="S82612">
    <property type="protein sequence ID" value="AAB37533.2"/>
    <property type="molecule type" value="mRNA"/>
</dbReference>
<dbReference type="EMBL" id="AJ003078">
    <property type="protein sequence ID" value="CAA05851.1"/>
    <property type="molecule type" value="mRNA"/>
</dbReference>
<dbReference type="EMBL" id="AJ003079">
    <property type="protein sequence ID" value="CAA05852.1"/>
    <property type="molecule type" value="mRNA"/>
</dbReference>
<dbReference type="EMBL" id="AJ005205">
    <property type="protein sequence ID" value="CAA06442.3"/>
    <property type="molecule type" value="Genomic_DNA"/>
</dbReference>
<dbReference type="EMBL" id="AF498984">
    <property type="protein sequence ID" value="AAM21131.1"/>
    <property type="molecule type" value="mRNA"/>
</dbReference>
<dbReference type="EMBL" id="BT007204">
    <property type="protein sequence ID" value="AAP35868.1"/>
    <property type="molecule type" value="mRNA"/>
</dbReference>
<dbReference type="EMBL" id="CD014118">
    <property type="status" value="NOT_ANNOTATED_CDS"/>
    <property type="molecule type" value="mRNA"/>
</dbReference>
<dbReference type="EMBL" id="AK299973">
    <property type="protein sequence ID" value="BAG61798.1"/>
    <property type="molecule type" value="mRNA"/>
</dbReference>
<dbReference type="EMBL" id="AP000908">
    <property type="status" value="NOT_ANNOTATED_CDS"/>
    <property type="molecule type" value="Genomic_DNA"/>
</dbReference>
<dbReference type="EMBL" id="CH471065">
    <property type="protein sequence ID" value="EAW67238.1"/>
    <property type="molecule type" value="Genomic_DNA"/>
</dbReference>
<dbReference type="EMBL" id="CH471065">
    <property type="protein sequence ID" value="EAW67240.1"/>
    <property type="molecule type" value="Genomic_DNA"/>
</dbReference>
<dbReference type="EMBL" id="BC002354">
    <property type="protein sequence ID" value="AAH02354.1"/>
    <property type="molecule type" value="mRNA"/>
</dbReference>
<dbReference type="EMBL" id="BC004453">
    <property type="protein sequence ID" value="AAH04453.2"/>
    <property type="molecule type" value="mRNA"/>
</dbReference>
<dbReference type="CCDS" id="CCDS53710.1">
    <molecule id="P46098-3"/>
</dbReference>
<dbReference type="CCDS" id="CCDS8365.3">
    <molecule id="P46098-1"/>
</dbReference>
<dbReference type="CCDS" id="CCDS8366.3">
    <molecule id="P46098-2"/>
</dbReference>
<dbReference type="RefSeq" id="NP_000860.3">
    <molecule id="P46098-1"/>
    <property type="nucleotide sequence ID" value="NM_000869.6"/>
</dbReference>
<dbReference type="RefSeq" id="NP_001155244.1">
    <molecule id="P46098-3"/>
    <property type="nucleotide sequence ID" value="NM_001161772.3"/>
</dbReference>
<dbReference type="RefSeq" id="NP_998786.3">
    <molecule id="P46098-2"/>
    <property type="nucleotide sequence ID" value="NM_213621.4"/>
</dbReference>
<dbReference type="PDB" id="8AXD">
    <property type="method" value="EM"/>
    <property type="resolution" value="2.98 A"/>
    <property type="chains" value="A/B/C/D/E=27-478"/>
</dbReference>
<dbReference type="PDB" id="8BL8">
    <property type="method" value="EM"/>
    <property type="resolution" value="3.21 A"/>
    <property type="chains" value="A/B/C/D/E=29-478"/>
</dbReference>
<dbReference type="PDB" id="8BLA">
    <property type="method" value="EM"/>
    <property type="resolution" value="3.30 A"/>
    <property type="chains" value="A/B/C/D/E=29-478"/>
</dbReference>
<dbReference type="PDB" id="8BLB">
    <property type="method" value="EM"/>
    <property type="resolution" value="3.30 A"/>
    <property type="chains" value="A/B/C/D/E=29-478"/>
</dbReference>
<dbReference type="PDBsum" id="8AXD"/>
<dbReference type="PDBsum" id="8BL8"/>
<dbReference type="PDBsum" id="8BLA"/>
<dbReference type="PDBsum" id="8BLB"/>
<dbReference type="EMDB" id="EMD-15699"/>
<dbReference type="EMDB" id="EMD-16103"/>
<dbReference type="EMDB" id="EMD-16104"/>
<dbReference type="EMDB" id="EMD-16105"/>
<dbReference type="SMR" id="P46098"/>
<dbReference type="BioGRID" id="109591">
    <property type="interactions" value="118"/>
</dbReference>
<dbReference type="ComplexPortal" id="CPX-2175">
    <property type="entry name" value="5-hydroxytryptamine-3A receptor complex"/>
</dbReference>
<dbReference type="ComplexPortal" id="CPX-271">
    <property type="entry name" value="5-hydroxytryptamine-3A/B receptor complex"/>
</dbReference>
<dbReference type="ComplexPortal" id="CPX-272">
    <property type="entry name" value="5-hydroxytryptamine-3A/D receptor complex"/>
</dbReference>
<dbReference type="ComplexPortal" id="CPX-273">
    <property type="entry name" value="5-hydroxytryptamine-3A/E receptor complex"/>
</dbReference>
<dbReference type="ComplexPortal" id="CPX-276">
    <property type="entry name" value="5-hydroxytryptamine-3A/C receptor complex"/>
</dbReference>
<dbReference type="CORUM" id="P46098"/>
<dbReference type="FunCoup" id="P46098">
    <property type="interactions" value="308"/>
</dbReference>
<dbReference type="IntAct" id="P46098">
    <property type="interactions" value="109"/>
</dbReference>
<dbReference type="STRING" id="9606.ENSP00000347754"/>
<dbReference type="BindingDB" id="P46098"/>
<dbReference type="ChEMBL" id="CHEMBL1899"/>
<dbReference type="DrugBank" id="DB00969">
    <property type="generic name" value="Alosetron"/>
</dbReference>
<dbReference type="DrugBank" id="DB00543">
    <property type="generic name" value="Amoxapine"/>
</dbReference>
<dbReference type="DrugBank" id="DB01238">
    <property type="generic name" value="Aripiprazole"/>
</dbReference>
<dbReference type="DrugBank" id="DB14185">
    <property type="generic name" value="Aripiprazole lauroxil"/>
</dbReference>
<dbReference type="DrugBank" id="DB01156">
    <property type="generic name" value="Bupropion"/>
</dbReference>
<dbReference type="DrugBank" id="DB09061">
    <property type="generic name" value="Cannabidiol"/>
</dbReference>
<dbReference type="DrugBank" id="DB01239">
    <property type="generic name" value="Chlorprothixene"/>
</dbReference>
<dbReference type="DrugBank" id="DB04885">
    <property type="generic name" value="Cilansetron"/>
</dbReference>
<dbReference type="DrugBank" id="DB00604">
    <property type="generic name" value="Cisapride"/>
</dbReference>
<dbReference type="DrugBank" id="DB00363">
    <property type="generic name" value="Clozapine"/>
</dbReference>
<dbReference type="DrugBank" id="DB05642">
    <property type="generic name" value="DDP-225"/>
</dbReference>
<dbReference type="DrugBank" id="DB05049">
    <property type="generic name" value="DDP733"/>
</dbReference>
<dbReference type="DrugBank" id="DB11273">
    <property type="generic name" value="Dihydroergocornine"/>
</dbReference>
<dbReference type="DrugBank" id="DB13345">
    <property type="generic name" value="Dihydroergocristine"/>
</dbReference>
<dbReference type="DrugBank" id="DB00757">
    <property type="generic name" value="Dolasetron"/>
</dbReference>
<dbReference type="DrugBank" id="DB00988">
    <property type="generic name" value="Dopamine"/>
</dbReference>
<dbReference type="DrugBank" id="DB01049">
    <property type="generic name" value="Ergoloid mesylate"/>
</dbReference>
<dbReference type="DrugBank" id="DB00898">
    <property type="generic name" value="Ethanol"/>
</dbReference>
<dbReference type="DrugBank" id="DB12141">
    <property type="generic name" value="Gilteritinib"/>
</dbReference>
<dbReference type="DrugBank" id="DB00889">
    <property type="generic name" value="Granisetron"/>
</dbReference>
<dbReference type="DrugBank" id="DB01221">
    <property type="generic name" value="Ketamine"/>
</dbReference>
<dbReference type="DrugBank" id="DB00555">
    <property type="generic name" value="Lamotrigine"/>
</dbReference>
<dbReference type="DrugBank" id="DB01202">
    <property type="generic name" value="Levetiracetam"/>
</dbReference>
<dbReference type="DrugBank" id="DB00408">
    <property type="generic name" value="Loxapine"/>
</dbReference>
<dbReference type="DrugBank" id="DB01043">
    <property type="generic name" value="Memantine"/>
</dbReference>
<dbReference type="DrugBank" id="DB00333">
    <property type="generic name" value="Methadone"/>
</dbReference>
<dbReference type="DrugBank" id="DB01233">
    <property type="generic name" value="Metoclopramide"/>
</dbReference>
<dbReference type="DrugBank" id="DB00334">
    <property type="generic name" value="Olanzapine"/>
</dbReference>
<dbReference type="DrugBank" id="DB00904">
    <property type="generic name" value="Ondansetron"/>
</dbReference>
<dbReference type="DrugBank" id="DB00377">
    <property type="generic name" value="Palonosetron"/>
</dbReference>
<dbReference type="DrugBank" id="DB00715">
    <property type="generic name" value="Paroxetine"/>
</dbReference>
<dbReference type="DrugBank" id="DB00721">
    <property type="generic name" value="Procaine"/>
</dbReference>
<dbReference type="DrugBank" id="DB01224">
    <property type="generic name" value="Quetiapine"/>
</dbReference>
<dbReference type="DrugBank" id="DB09290">
    <property type="generic name" value="Ramosetron"/>
</dbReference>
<dbReference type="DrugBank" id="DB04917">
    <property type="generic name" value="Renzapride"/>
</dbReference>
<dbReference type="DrugBank" id="DB00728">
    <property type="generic name" value="Rocuronium"/>
</dbReference>
<dbReference type="DrugBank" id="DB08839">
    <property type="generic name" value="Serotonin"/>
</dbReference>
<dbReference type="DrugBank" id="DB09304">
    <property type="generic name" value="Setiptiline"/>
</dbReference>
<dbReference type="DrugBank" id="DB13025">
    <property type="generic name" value="Tiapride"/>
</dbReference>
<dbReference type="DrugBank" id="DB06422">
    <property type="generic name" value="Ticalopride"/>
</dbReference>
<dbReference type="DrugBank" id="DB00726">
    <property type="generic name" value="Trimipramine"/>
</dbReference>
<dbReference type="DrugBank" id="DB11699">
    <property type="generic name" value="Tropisetron"/>
</dbReference>
<dbReference type="DrugBank" id="DB01199">
    <property type="generic name" value="Tubocurarine"/>
</dbReference>
<dbReference type="DrugBank" id="DB09068">
    <property type="generic name" value="Vortioxetine"/>
</dbReference>
<dbReference type="DrugBank" id="DB00246">
    <property type="generic name" value="Ziprasidone"/>
</dbReference>
<dbReference type="DrugCentral" id="P46098"/>
<dbReference type="GuidetoPHARMACOLOGY" id="373"/>
<dbReference type="TCDB" id="1.A.9.2.1">
    <property type="family name" value="the neurotransmitter receptor, cys loop, ligand-gated ion channel (lic) family"/>
</dbReference>
<dbReference type="GlyCosmos" id="P46098">
    <property type="glycosylation" value="4 sites, No reported glycans"/>
</dbReference>
<dbReference type="GlyGen" id="P46098">
    <property type="glycosylation" value="8 sites, 1 O-linked glycan (1 site)"/>
</dbReference>
<dbReference type="iPTMnet" id="P46098"/>
<dbReference type="PhosphoSitePlus" id="P46098"/>
<dbReference type="BioMuta" id="HTR3A"/>
<dbReference type="DMDM" id="1168222"/>
<dbReference type="MassIVE" id="P46098"/>
<dbReference type="PaxDb" id="9606-ENSP00000347754"/>
<dbReference type="Antibodypedia" id="18364">
    <property type="antibodies" value="413 antibodies from 35 providers"/>
</dbReference>
<dbReference type="DNASU" id="3359"/>
<dbReference type="Ensembl" id="ENST00000299961.5">
    <molecule id="P46098-3"/>
    <property type="protein sequence ID" value="ENSP00000299961.4"/>
    <property type="gene ID" value="ENSG00000166736.12"/>
</dbReference>
<dbReference type="Ensembl" id="ENST00000355556.6">
    <molecule id="P46098-5"/>
    <property type="protein sequence ID" value="ENSP00000347754.2"/>
    <property type="gene ID" value="ENSG00000166736.12"/>
</dbReference>
<dbReference type="Ensembl" id="ENST00000375498.6">
    <molecule id="P46098-4"/>
    <property type="protein sequence ID" value="ENSP00000364648.2"/>
    <property type="gene ID" value="ENSG00000166736.12"/>
</dbReference>
<dbReference type="Ensembl" id="ENST00000504030.7">
    <molecule id="P46098-1"/>
    <property type="protein sequence ID" value="ENSP00000424189.2"/>
    <property type="gene ID" value="ENSG00000166736.12"/>
</dbReference>
<dbReference type="Ensembl" id="ENST00000506841.6">
    <molecule id="P46098-2"/>
    <property type="protein sequence ID" value="ENSP00000424776.2"/>
    <property type="gene ID" value="ENSG00000166736.12"/>
</dbReference>
<dbReference type="GeneID" id="3359"/>
<dbReference type="KEGG" id="hsa:3359"/>
<dbReference type="MANE-Select" id="ENST00000504030.7">
    <property type="protein sequence ID" value="ENSP00000424189.2"/>
    <property type="RefSeq nucleotide sequence ID" value="NM_000869.6"/>
    <property type="RefSeq protein sequence ID" value="NP_000860.3"/>
</dbReference>
<dbReference type="UCSC" id="uc010rxa.3">
    <molecule id="P46098-1"/>
    <property type="organism name" value="human"/>
</dbReference>
<dbReference type="AGR" id="HGNC:5297"/>
<dbReference type="CTD" id="3359"/>
<dbReference type="DisGeNET" id="3359"/>
<dbReference type="GeneCards" id="HTR3A"/>
<dbReference type="HGNC" id="HGNC:5297">
    <property type="gene designation" value="HTR3A"/>
</dbReference>
<dbReference type="HPA" id="ENSG00000166736">
    <property type="expression patterns" value="Group enriched (brain, intestine, lymphoid tissue, pancreas, salivary gland)"/>
</dbReference>
<dbReference type="MalaCards" id="HTR3A"/>
<dbReference type="MIM" id="182139">
    <property type="type" value="gene"/>
</dbReference>
<dbReference type="neXtProt" id="NX_P46098"/>
<dbReference type="OpenTargets" id="ENSG00000166736"/>
<dbReference type="PharmGKB" id="PA29555"/>
<dbReference type="VEuPathDB" id="HostDB:ENSG00000166736"/>
<dbReference type="eggNOG" id="KOG3645">
    <property type="taxonomic scope" value="Eukaryota"/>
</dbReference>
<dbReference type="GeneTree" id="ENSGT00940000157705"/>
<dbReference type="HOGENOM" id="CLU_018074_5_0_1"/>
<dbReference type="InParanoid" id="P46098"/>
<dbReference type="OMA" id="KFFVVIR"/>
<dbReference type="OrthoDB" id="410315at2759"/>
<dbReference type="PAN-GO" id="P46098">
    <property type="GO annotations" value="11 GO annotations based on evolutionary models"/>
</dbReference>
<dbReference type="PhylomeDB" id="P46098"/>
<dbReference type="TreeFam" id="TF315605"/>
<dbReference type="PathwayCommons" id="P46098"/>
<dbReference type="Reactome" id="R-HSA-112314">
    <property type="pathway name" value="Neurotransmitter receptors and postsynaptic signal transmission"/>
</dbReference>
<dbReference type="SignaLink" id="P46098"/>
<dbReference type="SIGNOR" id="P46098"/>
<dbReference type="BioGRID-ORCS" id="3359">
    <property type="hits" value="7 hits in 1155 CRISPR screens"/>
</dbReference>
<dbReference type="GeneWiki" id="HTR3A"/>
<dbReference type="GenomeRNAi" id="3359"/>
<dbReference type="Pharos" id="P46098">
    <property type="development level" value="Tclin"/>
</dbReference>
<dbReference type="PRO" id="PR:P46098"/>
<dbReference type="Proteomes" id="UP000005640">
    <property type="component" value="Chromosome 11"/>
</dbReference>
<dbReference type="RNAct" id="P46098">
    <property type="molecule type" value="protein"/>
</dbReference>
<dbReference type="Bgee" id="ENSG00000166736">
    <property type="expression patterns" value="Expressed in dorsal root ganglion and 94 other cell types or tissues"/>
</dbReference>
<dbReference type="ExpressionAtlas" id="P46098">
    <property type="expression patterns" value="baseline and differential"/>
</dbReference>
<dbReference type="GO" id="GO:0032154">
    <property type="term" value="C:cleavage furrow"/>
    <property type="evidence" value="ECO:0000314"/>
    <property type="project" value="HGNC"/>
</dbReference>
<dbReference type="GO" id="GO:0043005">
    <property type="term" value="C:neuron projection"/>
    <property type="evidence" value="ECO:0000318"/>
    <property type="project" value="GO_Central"/>
</dbReference>
<dbReference type="GO" id="GO:0005886">
    <property type="term" value="C:plasma membrane"/>
    <property type="evidence" value="ECO:0000314"/>
    <property type="project" value="UniProt"/>
</dbReference>
<dbReference type="GO" id="GO:0045211">
    <property type="term" value="C:postsynaptic membrane"/>
    <property type="evidence" value="ECO:0007669"/>
    <property type="project" value="UniProtKB-SubCell"/>
</dbReference>
<dbReference type="GO" id="GO:1904602">
    <property type="term" value="C:serotonin-activated cation-selective channel complex"/>
    <property type="evidence" value="ECO:0000314"/>
    <property type="project" value="GO_Central"/>
</dbReference>
<dbReference type="GO" id="GO:0045202">
    <property type="term" value="C:synapse"/>
    <property type="evidence" value="ECO:0000318"/>
    <property type="project" value="GO_Central"/>
</dbReference>
<dbReference type="GO" id="GO:1902495">
    <property type="term" value="C:transmembrane transporter complex"/>
    <property type="evidence" value="ECO:0000318"/>
    <property type="project" value="GO_Central"/>
</dbReference>
<dbReference type="GO" id="GO:0005231">
    <property type="term" value="F:excitatory extracellular ligand-gated monoatomic ion channel activity"/>
    <property type="evidence" value="ECO:0000318"/>
    <property type="project" value="GO_Central"/>
</dbReference>
<dbReference type="GO" id="GO:0042802">
    <property type="term" value="F:identical protein binding"/>
    <property type="evidence" value="ECO:0007669"/>
    <property type="project" value="Ensembl"/>
</dbReference>
<dbReference type="GO" id="GO:0099507">
    <property type="term" value="F:ligand-gated monoatomic ion channel activity involved in regulation of presynaptic membrane potential"/>
    <property type="evidence" value="ECO:0007669"/>
    <property type="project" value="Ensembl"/>
</dbReference>
<dbReference type="GO" id="GO:0051378">
    <property type="term" value="F:serotonin binding"/>
    <property type="evidence" value="ECO:0000314"/>
    <property type="project" value="MGI"/>
</dbReference>
<dbReference type="GO" id="GO:0022850">
    <property type="term" value="F:serotonin-gated monoatomic cation channel activity"/>
    <property type="evidence" value="ECO:0000314"/>
    <property type="project" value="MGI"/>
</dbReference>
<dbReference type="GO" id="GO:1904315">
    <property type="term" value="F:transmitter-gated monoatomic ion channel activity involved in regulation of postsynaptic membrane potential"/>
    <property type="evidence" value="ECO:0000318"/>
    <property type="project" value="GO_Central"/>
</dbReference>
<dbReference type="GO" id="GO:0007268">
    <property type="term" value="P:chemical synaptic transmission"/>
    <property type="evidence" value="ECO:0000318"/>
    <property type="project" value="GO_Central"/>
</dbReference>
<dbReference type="GO" id="GO:0098662">
    <property type="term" value="P:inorganic cation transmembrane transport"/>
    <property type="evidence" value="ECO:0000314"/>
    <property type="project" value="ComplexPortal"/>
</dbReference>
<dbReference type="GO" id="GO:0034220">
    <property type="term" value="P:monoatomic ion transmembrane transport"/>
    <property type="evidence" value="ECO:0000318"/>
    <property type="project" value="GO_Central"/>
</dbReference>
<dbReference type="GO" id="GO:0042391">
    <property type="term" value="P:regulation of membrane potential"/>
    <property type="evidence" value="ECO:0000318"/>
    <property type="project" value="GO_Central"/>
</dbReference>
<dbReference type="GO" id="GO:0007210">
    <property type="term" value="P:serotonin receptor signaling pathway"/>
    <property type="evidence" value="ECO:0000314"/>
    <property type="project" value="ComplexPortal"/>
</dbReference>
<dbReference type="GO" id="GO:0140227">
    <property type="term" value="P:serotonin-gated cation-selective signaling pathway"/>
    <property type="evidence" value="ECO:0000314"/>
    <property type="project" value="UniProt"/>
</dbReference>
<dbReference type="CDD" id="cd19011">
    <property type="entry name" value="LGIC_ECD_5-HT3A"/>
    <property type="match status" value="1"/>
</dbReference>
<dbReference type="CDD" id="cd19063">
    <property type="entry name" value="LGIC_TM_5-HT3"/>
    <property type="match status" value="1"/>
</dbReference>
<dbReference type="FunFam" id="1.20.58.390:FF:000020">
    <property type="entry name" value="5-hydroxytryptamine (serotonin) receptor 3A"/>
    <property type="match status" value="1"/>
</dbReference>
<dbReference type="FunFam" id="2.70.170.10:FF:000017">
    <property type="entry name" value="5-hydroxytryptamine receptor 3A"/>
    <property type="match status" value="1"/>
</dbReference>
<dbReference type="Gene3D" id="2.70.170.10">
    <property type="entry name" value="Neurotransmitter-gated ion-channel ligand-binding domain"/>
    <property type="match status" value="1"/>
</dbReference>
<dbReference type="Gene3D" id="1.20.58.390">
    <property type="entry name" value="Neurotransmitter-gated ion-channel transmembrane domain"/>
    <property type="match status" value="1"/>
</dbReference>
<dbReference type="InterPro" id="IPR008132">
    <property type="entry name" value="5HT3_rcpt"/>
</dbReference>
<dbReference type="InterPro" id="IPR008133">
    <property type="entry name" value="5HT3_rcpt_A"/>
</dbReference>
<dbReference type="InterPro" id="IPR049944">
    <property type="entry name" value="LGIC_TM_5-HT3"/>
</dbReference>
<dbReference type="InterPro" id="IPR006202">
    <property type="entry name" value="Neur_chan_lig-bd"/>
</dbReference>
<dbReference type="InterPro" id="IPR036734">
    <property type="entry name" value="Neur_chan_lig-bd_sf"/>
</dbReference>
<dbReference type="InterPro" id="IPR006201">
    <property type="entry name" value="Neur_channel"/>
</dbReference>
<dbReference type="InterPro" id="IPR036719">
    <property type="entry name" value="Neuro-gated_channel_TM_sf"/>
</dbReference>
<dbReference type="InterPro" id="IPR038050">
    <property type="entry name" value="Neuro_actylchol_rec"/>
</dbReference>
<dbReference type="InterPro" id="IPR006029">
    <property type="entry name" value="Neurotrans-gated_channel_TM"/>
</dbReference>
<dbReference type="InterPro" id="IPR018000">
    <property type="entry name" value="Neurotransmitter_ion_chnl_CS"/>
</dbReference>
<dbReference type="NCBIfam" id="TIGR00860">
    <property type="entry name" value="LIC"/>
    <property type="match status" value="1"/>
</dbReference>
<dbReference type="PANTHER" id="PTHR18945">
    <property type="entry name" value="NEUROTRANSMITTER GATED ION CHANNEL"/>
    <property type="match status" value="1"/>
</dbReference>
<dbReference type="Pfam" id="PF02931">
    <property type="entry name" value="Neur_chan_LBD"/>
    <property type="match status" value="1"/>
</dbReference>
<dbReference type="Pfam" id="PF02932">
    <property type="entry name" value="Neur_chan_memb"/>
    <property type="match status" value="1"/>
</dbReference>
<dbReference type="PRINTS" id="PR01709">
    <property type="entry name" value="5HT3ARECEPTR"/>
</dbReference>
<dbReference type="PRINTS" id="PR01708">
    <property type="entry name" value="5HT3RECEPTOR"/>
</dbReference>
<dbReference type="PRINTS" id="PR00252">
    <property type="entry name" value="NRIONCHANNEL"/>
</dbReference>
<dbReference type="SUPFAM" id="SSF90112">
    <property type="entry name" value="Neurotransmitter-gated ion-channel transmembrane pore"/>
    <property type="match status" value="1"/>
</dbReference>
<dbReference type="SUPFAM" id="SSF63712">
    <property type="entry name" value="Nicotinic receptor ligand binding domain-like"/>
    <property type="match status" value="1"/>
</dbReference>
<dbReference type="PROSITE" id="PS00236">
    <property type="entry name" value="NEUROTR_ION_CHANNEL"/>
    <property type="match status" value="1"/>
</dbReference>
<name>5HT3A_HUMAN</name>